<feature type="chain" id="PRO_0000194745" description="Small ribosomal subunit protein eS21">
    <location>
        <begin position="1"/>
        <end position="83"/>
    </location>
</feature>
<evidence type="ECO:0000250" key="1">
    <source>
        <dbReference type="UniProtKB" id="O76927"/>
    </source>
</evidence>
<evidence type="ECO:0000250" key="2">
    <source>
        <dbReference type="UniProtKB" id="P63220"/>
    </source>
</evidence>
<evidence type="ECO:0000250" key="3">
    <source>
        <dbReference type="UniProtKB" id="P63221"/>
    </source>
</evidence>
<evidence type="ECO:0000305" key="4"/>
<keyword id="KW-0963">Cytoplasm</keyword>
<keyword id="KW-0256">Endoplasmic reticulum</keyword>
<keyword id="KW-0687">Ribonucleoprotein</keyword>
<keyword id="KW-0689">Ribosomal protein</keyword>
<reference key="1">
    <citation type="journal article" date="2003" name="Bioinformatics">
        <title>Annotation pattern of ESTs from Spodoptera frugiperda Sf9 cells and analysis of the ribosomal protein genes reveal insect-specific features and unexpectedly low codon usage bias.</title>
        <authorList>
            <person name="Landais I."/>
            <person name="Ogliastro M."/>
            <person name="Mita K."/>
            <person name="Nohata J."/>
            <person name="Lopez-Ferber M."/>
            <person name="Duonor-Cerutti M."/>
            <person name="Shimada T."/>
            <person name="Fournier P."/>
            <person name="Devauchelle G."/>
        </authorList>
    </citation>
    <scope>NUCLEOTIDE SEQUENCE [LARGE SCALE MRNA]</scope>
</reference>
<comment type="subunit">
    <text evidence="1">Component of the 40S small ribosomal subunit.</text>
</comment>
<comment type="subcellular location">
    <subcellularLocation>
        <location evidence="2">Cytoplasm</location>
        <location evidence="2">Cytosol</location>
    </subcellularLocation>
    <subcellularLocation>
        <location evidence="2">Cytoplasm</location>
    </subcellularLocation>
    <subcellularLocation>
        <location evidence="3">Rough endoplasmic reticulum</location>
    </subcellularLocation>
    <text evidence="2 3">Detected on cytosolic polysomes (By similarity). Detected in ribosomes that are associated with the rough endoplasmic reticulum (By similarity).</text>
</comment>
<comment type="similarity">
    <text evidence="4">Belongs to the eukaryotic ribosomal protein eS21 family.</text>
</comment>
<proteinExistence type="inferred from homology"/>
<organism>
    <name type="scientific">Spodoptera frugiperda</name>
    <name type="common">Fall armyworm</name>
    <dbReference type="NCBI Taxonomy" id="7108"/>
    <lineage>
        <taxon>Eukaryota</taxon>
        <taxon>Metazoa</taxon>
        <taxon>Ecdysozoa</taxon>
        <taxon>Arthropoda</taxon>
        <taxon>Hexapoda</taxon>
        <taxon>Insecta</taxon>
        <taxon>Pterygota</taxon>
        <taxon>Neoptera</taxon>
        <taxon>Endopterygota</taxon>
        <taxon>Lepidoptera</taxon>
        <taxon>Glossata</taxon>
        <taxon>Ditrysia</taxon>
        <taxon>Noctuoidea</taxon>
        <taxon>Noctuidae</taxon>
        <taxon>Amphipyrinae</taxon>
        <taxon>Spodoptera</taxon>
    </lineage>
</organism>
<name>RS21_SPOFR</name>
<accession>Q962Q8</accession>
<sequence>MQNDAGEFVDLYCPRKCSASNRLIHAKDHASVQLVIADVDPATGRAADTSKMYVVCGAIRRMGESDDCIVRLTKKDGILAKNY</sequence>
<protein>
    <recommendedName>
        <fullName evidence="4">Small ribosomal subunit protein eS21</fullName>
    </recommendedName>
    <alternativeName>
        <fullName>40S ribosomal protein S21</fullName>
    </alternativeName>
</protein>
<gene>
    <name type="primary">RpS21</name>
</gene>
<dbReference type="EMBL" id="AF400218">
    <property type="protein sequence ID" value="AAK92190.1"/>
    <property type="molecule type" value="mRNA"/>
</dbReference>
<dbReference type="SMR" id="Q962Q8"/>
<dbReference type="EnsemblMetazoa" id="XM_035599916.2">
    <property type="protein sequence ID" value="XP_035455809.1"/>
    <property type="gene ID" value="LOC118280046"/>
</dbReference>
<dbReference type="OrthoDB" id="278325at2759"/>
<dbReference type="Proteomes" id="UP000829999">
    <property type="component" value="Unplaced"/>
</dbReference>
<dbReference type="GO" id="GO:0005829">
    <property type="term" value="C:cytosol"/>
    <property type="evidence" value="ECO:0007669"/>
    <property type="project" value="UniProtKB-SubCell"/>
</dbReference>
<dbReference type="GO" id="GO:1990904">
    <property type="term" value="C:ribonucleoprotein complex"/>
    <property type="evidence" value="ECO:0007669"/>
    <property type="project" value="UniProtKB-KW"/>
</dbReference>
<dbReference type="GO" id="GO:0005840">
    <property type="term" value="C:ribosome"/>
    <property type="evidence" value="ECO:0007669"/>
    <property type="project" value="UniProtKB-KW"/>
</dbReference>
<dbReference type="GO" id="GO:0005791">
    <property type="term" value="C:rough endoplasmic reticulum"/>
    <property type="evidence" value="ECO:0007669"/>
    <property type="project" value="UniProtKB-SubCell"/>
</dbReference>
<dbReference type="GO" id="GO:0003735">
    <property type="term" value="F:structural constituent of ribosome"/>
    <property type="evidence" value="ECO:0007669"/>
    <property type="project" value="InterPro"/>
</dbReference>
<dbReference type="GO" id="GO:0006412">
    <property type="term" value="P:translation"/>
    <property type="evidence" value="ECO:0007669"/>
    <property type="project" value="InterPro"/>
</dbReference>
<dbReference type="FunFam" id="3.30.1230.20:FF:000001">
    <property type="entry name" value="40S ribosomal protein S21"/>
    <property type="match status" value="1"/>
</dbReference>
<dbReference type="Gene3D" id="3.30.1230.20">
    <property type="match status" value="1"/>
</dbReference>
<dbReference type="InterPro" id="IPR001931">
    <property type="entry name" value="Ribosomal_eS21"/>
</dbReference>
<dbReference type="InterPro" id="IPR018279">
    <property type="entry name" value="Ribosomal_eS21_CS"/>
</dbReference>
<dbReference type="InterPro" id="IPR038579">
    <property type="entry name" value="Ribosomal_eS21_sf"/>
</dbReference>
<dbReference type="PANTHER" id="PTHR10442">
    <property type="entry name" value="40S RIBOSOMAL PROTEIN S21"/>
    <property type="match status" value="1"/>
</dbReference>
<dbReference type="Pfam" id="PF01249">
    <property type="entry name" value="Ribosomal_S21e"/>
    <property type="match status" value="1"/>
</dbReference>
<dbReference type="PIRSF" id="PIRSF002148">
    <property type="entry name" value="Ribosomal_S21e"/>
    <property type="match status" value="1"/>
</dbReference>
<dbReference type="PROSITE" id="PS00996">
    <property type="entry name" value="RIBOSOMAL_S21E"/>
    <property type="match status" value="1"/>
</dbReference>